<reference key="1">
    <citation type="journal article" date="2007" name="Proc. Natl. Acad. Sci. U.S.A.">
        <title>Genome and proteome of long-chain alkane degrading Geobacillus thermodenitrificans NG80-2 isolated from a deep-subsurface oil reservoir.</title>
        <authorList>
            <person name="Feng L."/>
            <person name="Wang W."/>
            <person name="Cheng J."/>
            <person name="Ren Y."/>
            <person name="Zhao G."/>
            <person name="Gao C."/>
            <person name="Tang Y."/>
            <person name="Liu X."/>
            <person name="Han W."/>
            <person name="Peng X."/>
            <person name="Liu R."/>
            <person name="Wang L."/>
        </authorList>
    </citation>
    <scope>NUCLEOTIDE SEQUENCE [LARGE SCALE GENOMIC DNA]</scope>
    <source>
        <strain>NG80-2</strain>
    </source>
</reference>
<proteinExistence type="inferred from homology"/>
<evidence type="ECO:0000255" key="1">
    <source>
        <dbReference type="HAMAP-Rule" id="MF_00097"/>
    </source>
</evidence>
<sequence length="221" mass="23485">MARITSEEMKERLAVYFIMGSQNSERPAEDVLKEALDGGVTLFQFREKGSAALEGEEKEALARQLQRLCRTYGVPFIVNDDVELAIAIDADGVHVGQDDEDARRVREKIGDKILGVSAHNVEEARAAIEAGADYIGVGPIYPTRSKDDANEAQGPGILRHLREQGITIPIVAIGGITADNTRAVIEAGADGVSVISAIASAPEPKAAAAALATAVREANLR</sequence>
<feature type="chain" id="PRO_1000008139" description="Thiamine-phosphate synthase">
    <location>
        <begin position="1"/>
        <end position="221"/>
    </location>
</feature>
<feature type="binding site" evidence="1">
    <location>
        <begin position="44"/>
        <end position="48"/>
    </location>
    <ligand>
        <name>4-amino-2-methyl-5-(diphosphooxymethyl)pyrimidine</name>
        <dbReference type="ChEBI" id="CHEBI:57841"/>
    </ligand>
</feature>
<feature type="binding site" evidence="1">
    <location>
        <position position="79"/>
    </location>
    <ligand>
        <name>4-amino-2-methyl-5-(diphosphooxymethyl)pyrimidine</name>
        <dbReference type="ChEBI" id="CHEBI:57841"/>
    </ligand>
</feature>
<feature type="binding site" evidence="1">
    <location>
        <position position="80"/>
    </location>
    <ligand>
        <name>Mg(2+)</name>
        <dbReference type="ChEBI" id="CHEBI:18420"/>
    </ligand>
</feature>
<feature type="binding site" evidence="1">
    <location>
        <position position="99"/>
    </location>
    <ligand>
        <name>Mg(2+)</name>
        <dbReference type="ChEBI" id="CHEBI:18420"/>
    </ligand>
</feature>
<feature type="binding site" evidence="1">
    <location>
        <position position="117"/>
    </location>
    <ligand>
        <name>4-amino-2-methyl-5-(diphosphooxymethyl)pyrimidine</name>
        <dbReference type="ChEBI" id="CHEBI:57841"/>
    </ligand>
</feature>
<feature type="binding site" evidence="1">
    <location>
        <begin position="143"/>
        <end position="145"/>
    </location>
    <ligand>
        <name>2-[(2R,5Z)-2-carboxy-4-methylthiazol-5(2H)-ylidene]ethyl phosphate</name>
        <dbReference type="ChEBI" id="CHEBI:62899"/>
    </ligand>
</feature>
<feature type="binding site" evidence="1">
    <location>
        <position position="146"/>
    </location>
    <ligand>
        <name>4-amino-2-methyl-5-(diphosphooxymethyl)pyrimidine</name>
        <dbReference type="ChEBI" id="CHEBI:57841"/>
    </ligand>
</feature>
<feature type="binding site" evidence="1">
    <location>
        <position position="175"/>
    </location>
    <ligand>
        <name>2-[(2R,5Z)-2-carboxy-4-methylthiazol-5(2H)-ylidene]ethyl phosphate</name>
        <dbReference type="ChEBI" id="CHEBI:62899"/>
    </ligand>
</feature>
<feature type="binding site" evidence="1">
    <location>
        <begin position="195"/>
        <end position="196"/>
    </location>
    <ligand>
        <name>2-[(2R,5Z)-2-carboxy-4-methylthiazol-5(2H)-ylidene]ethyl phosphate</name>
        <dbReference type="ChEBI" id="CHEBI:62899"/>
    </ligand>
</feature>
<name>THIE_GEOTN</name>
<gene>
    <name evidence="1" type="primary">thiE</name>
    <name type="ordered locus">GTNG_1362</name>
</gene>
<accession>A4IN28</accession>
<comment type="function">
    <text evidence="1">Condenses 4-methyl-5-(beta-hydroxyethyl)thiazole monophosphate (THZ-P) and 2-methyl-4-amino-5-hydroxymethyl pyrimidine pyrophosphate (HMP-PP) to form thiamine monophosphate (TMP).</text>
</comment>
<comment type="catalytic activity">
    <reaction evidence="1">
        <text>2-[(2R,5Z)-2-carboxy-4-methylthiazol-5(2H)-ylidene]ethyl phosphate + 4-amino-2-methyl-5-(diphosphooxymethyl)pyrimidine + 2 H(+) = thiamine phosphate + CO2 + diphosphate</text>
        <dbReference type="Rhea" id="RHEA:47844"/>
        <dbReference type="ChEBI" id="CHEBI:15378"/>
        <dbReference type="ChEBI" id="CHEBI:16526"/>
        <dbReference type="ChEBI" id="CHEBI:33019"/>
        <dbReference type="ChEBI" id="CHEBI:37575"/>
        <dbReference type="ChEBI" id="CHEBI:57841"/>
        <dbReference type="ChEBI" id="CHEBI:62899"/>
        <dbReference type="EC" id="2.5.1.3"/>
    </reaction>
</comment>
<comment type="catalytic activity">
    <reaction evidence="1">
        <text>2-(2-carboxy-4-methylthiazol-5-yl)ethyl phosphate + 4-amino-2-methyl-5-(diphosphooxymethyl)pyrimidine + 2 H(+) = thiamine phosphate + CO2 + diphosphate</text>
        <dbReference type="Rhea" id="RHEA:47848"/>
        <dbReference type="ChEBI" id="CHEBI:15378"/>
        <dbReference type="ChEBI" id="CHEBI:16526"/>
        <dbReference type="ChEBI" id="CHEBI:33019"/>
        <dbReference type="ChEBI" id="CHEBI:37575"/>
        <dbReference type="ChEBI" id="CHEBI:57841"/>
        <dbReference type="ChEBI" id="CHEBI:62890"/>
        <dbReference type="EC" id="2.5.1.3"/>
    </reaction>
</comment>
<comment type="catalytic activity">
    <reaction evidence="1">
        <text>4-methyl-5-(2-phosphooxyethyl)-thiazole + 4-amino-2-methyl-5-(diphosphooxymethyl)pyrimidine + H(+) = thiamine phosphate + diphosphate</text>
        <dbReference type="Rhea" id="RHEA:22328"/>
        <dbReference type="ChEBI" id="CHEBI:15378"/>
        <dbReference type="ChEBI" id="CHEBI:33019"/>
        <dbReference type="ChEBI" id="CHEBI:37575"/>
        <dbReference type="ChEBI" id="CHEBI:57841"/>
        <dbReference type="ChEBI" id="CHEBI:58296"/>
        <dbReference type="EC" id="2.5.1.3"/>
    </reaction>
</comment>
<comment type="cofactor">
    <cofactor evidence="1">
        <name>Mg(2+)</name>
        <dbReference type="ChEBI" id="CHEBI:18420"/>
    </cofactor>
    <text evidence="1">Binds 1 Mg(2+) ion per subunit.</text>
</comment>
<comment type="pathway">
    <text evidence="1">Cofactor biosynthesis; thiamine diphosphate biosynthesis; thiamine phosphate from 4-amino-2-methyl-5-diphosphomethylpyrimidine and 4-methyl-5-(2-phosphoethyl)-thiazole: step 1/1.</text>
</comment>
<comment type="similarity">
    <text evidence="1">Belongs to the thiamine-phosphate synthase family.</text>
</comment>
<protein>
    <recommendedName>
        <fullName evidence="1">Thiamine-phosphate synthase</fullName>
        <shortName evidence="1">TP synthase</shortName>
        <shortName evidence="1">TPS</shortName>
        <ecNumber evidence="1">2.5.1.3</ecNumber>
    </recommendedName>
    <alternativeName>
        <fullName evidence="1">Thiamine-phosphate pyrophosphorylase</fullName>
        <shortName evidence="1">TMP pyrophosphorylase</shortName>
        <shortName evidence="1">TMP-PPase</shortName>
    </alternativeName>
</protein>
<keyword id="KW-0460">Magnesium</keyword>
<keyword id="KW-0479">Metal-binding</keyword>
<keyword id="KW-0784">Thiamine biosynthesis</keyword>
<keyword id="KW-0808">Transferase</keyword>
<organism>
    <name type="scientific">Geobacillus thermodenitrificans (strain NG80-2)</name>
    <dbReference type="NCBI Taxonomy" id="420246"/>
    <lineage>
        <taxon>Bacteria</taxon>
        <taxon>Bacillati</taxon>
        <taxon>Bacillota</taxon>
        <taxon>Bacilli</taxon>
        <taxon>Bacillales</taxon>
        <taxon>Anoxybacillaceae</taxon>
        <taxon>Geobacillus</taxon>
    </lineage>
</organism>
<dbReference type="EC" id="2.5.1.3" evidence="1"/>
<dbReference type="EMBL" id="CP000557">
    <property type="protein sequence ID" value="ABO66732.1"/>
    <property type="molecule type" value="Genomic_DNA"/>
</dbReference>
<dbReference type="RefSeq" id="WP_011887289.1">
    <property type="nucleotide sequence ID" value="NC_009328.1"/>
</dbReference>
<dbReference type="SMR" id="A4IN28"/>
<dbReference type="GeneID" id="87621054"/>
<dbReference type="KEGG" id="gtn:GTNG_1362"/>
<dbReference type="eggNOG" id="COG0352">
    <property type="taxonomic scope" value="Bacteria"/>
</dbReference>
<dbReference type="HOGENOM" id="CLU_018272_3_2_9"/>
<dbReference type="UniPathway" id="UPA00060">
    <property type="reaction ID" value="UER00141"/>
</dbReference>
<dbReference type="Proteomes" id="UP000001578">
    <property type="component" value="Chromosome"/>
</dbReference>
<dbReference type="GO" id="GO:0005737">
    <property type="term" value="C:cytoplasm"/>
    <property type="evidence" value="ECO:0007669"/>
    <property type="project" value="TreeGrafter"/>
</dbReference>
<dbReference type="GO" id="GO:0000287">
    <property type="term" value="F:magnesium ion binding"/>
    <property type="evidence" value="ECO:0007669"/>
    <property type="project" value="UniProtKB-UniRule"/>
</dbReference>
<dbReference type="GO" id="GO:0004789">
    <property type="term" value="F:thiamine-phosphate diphosphorylase activity"/>
    <property type="evidence" value="ECO:0007669"/>
    <property type="project" value="UniProtKB-UniRule"/>
</dbReference>
<dbReference type="GO" id="GO:0009228">
    <property type="term" value="P:thiamine biosynthetic process"/>
    <property type="evidence" value="ECO:0007669"/>
    <property type="project" value="UniProtKB-KW"/>
</dbReference>
<dbReference type="GO" id="GO:0009229">
    <property type="term" value="P:thiamine diphosphate biosynthetic process"/>
    <property type="evidence" value="ECO:0007669"/>
    <property type="project" value="UniProtKB-UniRule"/>
</dbReference>
<dbReference type="CDD" id="cd00564">
    <property type="entry name" value="TMP_TenI"/>
    <property type="match status" value="1"/>
</dbReference>
<dbReference type="FunFam" id="3.20.20.70:FF:000096">
    <property type="entry name" value="Thiamine-phosphate synthase"/>
    <property type="match status" value="1"/>
</dbReference>
<dbReference type="Gene3D" id="3.20.20.70">
    <property type="entry name" value="Aldolase class I"/>
    <property type="match status" value="1"/>
</dbReference>
<dbReference type="HAMAP" id="MF_00097">
    <property type="entry name" value="TMP_synthase"/>
    <property type="match status" value="1"/>
</dbReference>
<dbReference type="InterPro" id="IPR013785">
    <property type="entry name" value="Aldolase_TIM"/>
</dbReference>
<dbReference type="InterPro" id="IPR036206">
    <property type="entry name" value="ThiamineP_synth_sf"/>
</dbReference>
<dbReference type="InterPro" id="IPR022998">
    <property type="entry name" value="ThiamineP_synth_TenI"/>
</dbReference>
<dbReference type="InterPro" id="IPR034291">
    <property type="entry name" value="TMP_synthase"/>
</dbReference>
<dbReference type="NCBIfam" id="TIGR00693">
    <property type="entry name" value="thiE"/>
    <property type="match status" value="1"/>
</dbReference>
<dbReference type="PANTHER" id="PTHR20857">
    <property type="entry name" value="THIAMINE-PHOSPHATE PYROPHOSPHORYLASE"/>
    <property type="match status" value="1"/>
</dbReference>
<dbReference type="PANTHER" id="PTHR20857:SF15">
    <property type="entry name" value="THIAMINE-PHOSPHATE SYNTHASE"/>
    <property type="match status" value="1"/>
</dbReference>
<dbReference type="Pfam" id="PF02581">
    <property type="entry name" value="TMP-TENI"/>
    <property type="match status" value="1"/>
</dbReference>
<dbReference type="SUPFAM" id="SSF51391">
    <property type="entry name" value="Thiamin phosphate synthase"/>
    <property type="match status" value="1"/>
</dbReference>